<reference key="1">
    <citation type="journal article" date="1994" name="J. Bacteriol.">
        <title>Sequencing analysis reveals a unique gene organization in the gyrB region of Mycoplasma hominis.</title>
        <authorList>
            <person name="Ladefoged S.A."/>
            <person name="Christiansen G."/>
        </authorList>
    </citation>
    <scope>NUCLEOTIDE SEQUENCE [GENOMIC DNA]</scope>
</reference>
<reference key="2">
    <citation type="journal article" date="2009" name="PLoS Genet.">
        <title>Life on arginine for Mycoplasma hominis: clues from its minimal genome and comparison with other human urogenital mycoplasmas.</title>
        <authorList>
            <person name="Pereyre S."/>
            <person name="Sirand-Pugnet P."/>
            <person name="Beven L."/>
            <person name="Charron A."/>
            <person name="Renaudin H."/>
            <person name="Barre A."/>
            <person name="Avenaud P."/>
            <person name="Jacob D."/>
            <person name="Couloux A."/>
            <person name="Barbe V."/>
            <person name="de Daruvar A."/>
            <person name="Blanchard A."/>
            <person name="Bebear C."/>
        </authorList>
    </citation>
    <scope>NUCLEOTIDE SEQUENCE [LARGE SCALE GENOMIC DNA]</scope>
    <source>
        <strain>ATCC 23114 / DSM 25592 / NBRC 14850 / NCTC 10111 / PG21</strain>
    </source>
</reference>
<feature type="chain" id="PRO_0000171454" description="Protein LicA homolog">
    <location>
        <begin position="1"/>
        <end position="249"/>
    </location>
</feature>
<comment type="similarity">
    <text evidence="1">Belongs to the peptidase S49 family.</text>
</comment>
<evidence type="ECO:0000305" key="1"/>
<accession>P43052</accession>
<accession>D1J8G5</accession>
<name>LICA_METH1</name>
<protein>
    <recommendedName>
        <fullName>Protein LicA homolog</fullName>
    </recommendedName>
</protein>
<proteinExistence type="inferred from homology"/>
<keyword id="KW-1185">Reference proteome</keyword>
<gene>
    <name type="primary">licA</name>
    <name type="ordered locus">MHO_3770</name>
</gene>
<dbReference type="EMBL" id="X77529">
    <property type="protein sequence ID" value="CAA54666.1"/>
    <property type="molecule type" value="Genomic_DNA"/>
</dbReference>
<dbReference type="EMBL" id="FP236530">
    <property type="protein sequence ID" value="CAX37512.1"/>
    <property type="molecule type" value="Genomic_DNA"/>
</dbReference>
<dbReference type="RefSeq" id="WP_012855651.1">
    <property type="nucleotide sequence ID" value="NC_013511.1"/>
</dbReference>
<dbReference type="SMR" id="P43052"/>
<dbReference type="STRING" id="347256.MHO_3770"/>
<dbReference type="PaxDb" id="347256-MHO_3770"/>
<dbReference type="KEGG" id="mho:MHO_3770"/>
<dbReference type="eggNOG" id="COG0510">
    <property type="taxonomic scope" value="Bacteria"/>
</dbReference>
<dbReference type="HOGENOM" id="CLU_1123571_0_0_14"/>
<dbReference type="Proteomes" id="UP000002631">
    <property type="component" value="Chromosome"/>
</dbReference>
<dbReference type="Gene3D" id="3.90.1200.10">
    <property type="match status" value="1"/>
</dbReference>
<dbReference type="InterPro" id="IPR011009">
    <property type="entry name" value="Kinase-like_dom_sf"/>
</dbReference>
<dbReference type="Pfam" id="PF01633">
    <property type="entry name" value="Choline_kinase"/>
    <property type="match status" value="1"/>
</dbReference>
<dbReference type="SUPFAM" id="SSF56112">
    <property type="entry name" value="Protein kinase-like (PK-like)"/>
    <property type="match status" value="1"/>
</dbReference>
<organism>
    <name type="scientific">Metamycoplasma hominis (strain ATCC 23114 / DSM 25592 / NBRC 14850 / NCTC 10111 / PG21)</name>
    <name type="common">Mycoplasma hominis</name>
    <dbReference type="NCBI Taxonomy" id="347256"/>
    <lineage>
        <taxon>Bacteria</taxon>
        <taxon>Bacillati</taxon>
        <taxon>Mycoplasmatota</taxon>
        <taxon>Mycoplasmoidales</taxon>
        <taxon>Metamycoplasmataceae</taxon>
        <taxon>Metamycoplasma</taxon>
    </lineage>
</organism>
<sequence>MLKPLTNQGFTNKVFYDDETNRFIKIKSYDGFNHKSDAFLLNNLDFCPKIFVDNKKELQTEWINGITLNESLLTDDILKTIGKNLITLHNSKLKFYKENQIARRFNIYRKKISSLNRKIPILDKYYKKINLFLRNIDNSAPVHNDLWLFNMIKVNDKIYFTDWEYATMGDVHFDLAYFIESSNLNEKQEKVFLDAYGDDFEPKYLFIHKILVNALIVLWINAHEVLPFDDSLYLNRVEKYMEQLEKEKE</sequence>